<comment type="function">
    <text evidence="1">With S4 and S12 plays an important role in translational accuracy.</text>
</comment>
<comment type="function">
    <text evidence="1">Located at the back of the 30S subunit body where it stabilizes the conformation of the head with respect to the body.</text>
</comment>
<comment type="subunit">
    <text evidence="1">Part of the 30S ribosomal subunit. Contacts proteins S4 and S8.</text>
</comment>
<comment type="domain">
    <text>The N-terminal domain interacts with the head of the 30S subunit; the C-terminal domain interacts with the body and contacts protein S4. The interaction surface between S4 and S5 is involved in control of translational fidelity.</text>
</comment>
<comment type="similarity">
    <text evidence="1">Belongs to the universal ribosomal protein uS5 family.</text>
</comment>
<reference key="1">
    <citation type="journal article" date="2000" name="Nature">
        <title>The complete sequence of the mucosal pathogen Ureaplasma urealyticum.</title>
        <authorList>
            <person name="Glass J.I."/>
            <person name="Lefkowitz E.J."/>
            <person name="Glass J.S."/>
            <person name="Heiner C.R."/>
            <person name="Chen E.Y."/>
            <person name="Cassell G.H."/>
        </authorList>
    </citation>
    <scope>NUCLEOTIDE SEQUENCE [LARGE SCALE GENOMIC DNA]</scope>
    <source>
        <strain>ATCC 700970</strain>
    </source>
</reference>
<evidence type="ECO:0000255" key="1">
    <source>
        <dbReference type="HAMAP-Rule" id="MF_01307"/>
    </source>
</evidence>
<evidence type="ECO:0000305" key="2"/>
<proteinExistence type="inferred from homology"/>
<dbReference type="EMBL" id="AF222894">
    <property type="protein sequence ID" value="AAF30657.1"/>
    <property type="molecule type" value="Genomic_DNA"/>
</dbReference>
<dbReference type="RefSeq" id="WP_006688963.1">
    <property type="nucleotide sequence ID" value="NC_002162.1"/>
</dbReference>
<dbReference type="SMR" id="Q9PQP3"/>
<dbReference type="STRING" id="273119.UU248"/>
<dbReference type="EnsemblBacteria" id="AAF30657">
    <property type="protein sequence ID" value="AAF30657"/>
    <property type="gene ID" value="UU248"/>
</dbReference>
<dbReference type="GeneID" id="29672677"/>
<dbReference type="KEGG" id="uur:UU248"/>
<dbReference type="eggNOG" id="COG0098">
    <property type="taxonomic scope" value="Bacteria"/>
</dbReference>
<dbReference type="HOGENOM" id="CLU_065898_2_1_14"/>
<dbReference type="OrthoDB" id="9809045at2"/>
<dbReference type="Proteomes" id="UP000000423">
    <property type="component" value="Chromosome"/>
</dbReference>
<dbReference type="GO" id="GO:0015935">
    <property type="term" value="C:small ribosomal subunit"/>
    <property type="evidence" value="ECO:0007669"/>
    <property type="project" value="InterPro"/>
</dbReference>
<dbReference type="GO" id="GO:0019843">
    <property type="term" value="F:rRNA binding"/>
    <property type="evidence" value="ECO:0007669"/>
    <property type="project" value="UniProtKB-UniRule"/>
</dbReference>
<dbReference type="GO" id="GO:0003735">
    <property type="term" value="F:structural constituent of ribosome"/>
    <property type="evidence" value="ECO:0007669"/>
    <property type="project" value="InterPro"/>
</dbReference>
<dbReference type="GO" id="GO:0006412">
    <property type="term" value="P:translation"/>
    <property type="evidence" value="ECO:0007669"/>
    <property type="project" value="UniProtKB-UniRule"/>
</dbReference>
<dbReference type="FunFam" id="3.30.160.20:FF:000001">
    <property type="entry name" value="30S ribosomal protein S5"/>
    <property type="match status" value="1"/>
</dbReference>
<dbReference type="FunFam" id="3.30.230.10:FF:000002">
    <property type="entry name" value="30S ribosomal protein S5"/>
    <property type="match status" value="1"/>
</dbReference>
<dbReference type="Gene3D" id="3.30.160.20">
    <property type="match status" value="1"/>
</dbReference>
<dbReference type="Gene3D" id="3.30.230.10">
    <property type="match status" value="1"/>
</dbReference>
<dbReference type="HAMAP" id="MF_01307_B">
    <property type="entry name" value="Ribosomal_uS5_B"/>
    <property type="match status" value="1"/>
</dbReference>
<dbReference type="InterPro" id="IPR020568">
    <property type="entry name" value="Ribosomal_Su5_D2-typ_SF"/>
</dbReference>
<dbReference type="InterPro" id="IPR000851">
    <property type="entry name" value="Ribosomal_uS5"/>
</dbReference>
<dbReference type="InterPro" id="IPR005712">
    <property type="entry name" value="Ribosomal_uS5_bac-type"/>
</dbReference>
<dbReference type="InterPro" id="IPR005324">
    <property type="entry name" value="Ribosomal_uS5_C"/>
</dbReference>
<dbReference type="InterPro" id="IPR013810">
    <property type="entry name" value="Ribosomal_uS5_N"/>
</dbReference>
<dbReference type="InterPro" id="IPR018192">
    <property type="entry name" value="Ribosomal_uS5_N_CS"/>
</dbReference>
<dbReference type="InterPro" id="IPR014721">
    <property type="entry name" value="Ribsml_uS5_D2-typ_fold_subgr"/>
</dbReference>
<dbReference type="NCBIfam" id="TIGR01021">
    <property type="entry name" value="rpsE_bact"/>
    <property type="match status" value="1"/>
</dbReference>
<dbReference type="PANTHER" id="PTHR48277">
    <property type="entry name" value="MITOCHONDRIAL RIBOSOMAL PROTEIN S5"/>
    <property type="match status" value="1"/>
</dbReference>
<dbReference type="PANTHER" id="PTHR48277:SF1">
    <property type="entry name" value="MITOCHONDRIAL RIBOSOMAL PROTEIN S5"/>
    <property type="match status" value="1"/>
</dbReference>
<dbReference type="Pfam" id="PF00333">
    <property type="entry name" value="Ribosomal_S5"/>
    <property type="match status" value="1"/>
</dbReference>
<dbReference type="Pfam" id="PF03719">
    <property type="entry name" value="Ribosomal_S5_C"/>
    <property type="match status" value="1"/>
</dbReference>
<dbReference type="SUPFAM" id="SSF54768">
    <property type="entry name" value="dsRNA-binding domain-like"/>
    <property type="match status" value="1"/>
</dbReference>
<dbReference type="SUPFAM" id="SSF54211">
    <property type="entry name" value="Ribosomal protein S5 domain 2-like"/>
    <property type="match status" value="1"/>
</dbReference>
<dbReference type="PROSITE" id="PS00585">
    <property type="entry name" value="RIBOSOMAL_S5"/>
    <property type="match status" value="1"/>
</dbReference>
<dbReference type="PROSITE" id="PS50881">
    <property type="entry name" value="S5_DSRBD"/>
    <property type="match status" value="1"/>
</dbReference>
<protein>
    <recommendedName>
        <fullName evidence="1">Small ribosomal subunit protein uS5</fullName>
    </recommendedName>
    <alternativeName>
        <fullName evidence="2">30S ribosomal protein S5</fullName>
    </alternativeName>
</protein>
<keyword id="KW-1185">Reference proteome</keyword>
<keyword id="KW-0687">Ribonucleoprotein</keyword>
<keyword id="KW-0689">Ribosomal protein</keyword>
<keyword id="KW-0694">RNA-binding</keyword>
<keyword id="KW-0699">rRNA-binding</keyword>
<organism>
    <name type="scientific">Ureaplasma parvum serovar 3 (strain ATCC 700970)</name>
    <dbReference type="NCBI Taxonomy" id="273119"/>
    <lineage>
        <taxon>Bacteria</taxon>
        <taxon>Bacillati</taxon>
        <taxon>Mycoplasmatota</taxon>
        <taxon>Mycoplasmoidales</taxon>
        <taxon>Mycoplasmoidaceae</taxon>
        <taxon>Ureaplasma</taxon>
    </lineage>
</organism>
<feature type="chain" id="PRO_0000131626" description="Small ribosomal subunit protein uS5">
    <location>
        <begin position="1"/>
        <end position="203"/>
    </location>
</feature>
<feature type="domain" description="S5 DRBM" evidence="1">
    <location>
        <begin position="49"/>
        <end position="112"/>
    </location>
</feature>
<gene>
    <name evidence="1" type="primary">rpsE</name>
    <name evidence="1" type="synonym">rps5</name>
    <name type="ordered locus">UU248</name>
</gene>
<sequence>MENNVKKETIVDSEKVEKQQLVTAPVVNKKENTEPKAKTFKRETTTSNFEERVVKIKRISKTTKGGRMMRFSALVVIGDKNGTVGFGMGKSIEVPDAIKKAIKNANNNLIKVKQTKKGSIYHDVNGRHGAAKVMLLPAPEGTGIIAGGPVRAVVELAGFTDIYTKSRGANAPMNVIRATINGLLQQLTPKEIARLRDKSLREI</sequence>
<name>RS5_UREPA</name>
<accession>Q9PQP3</accession>